<keyword id="KW-0963">Cytoplasm</keyword>
<keyword id="KW-0521">NADP</keyword>
<keyword id="KW-0560">Oxidoreductase</keyword>
<keyword id="KW-0671">Queuosine biosynthesis</keyword>
<dbReference type="EC" id="1.7.1.13" evidence="1"/>
<dbReference type="EMBL" id="CP001072">
    <property type="protein sequence ID" value="ACD48836.1"/>
    <property type="molecule type" value="Genomic_DNA"/>
</dbReference>
<dbReference type="RefSeq" id="WP_000187076.1">
    <property type="nucleotide sequence ID" value="NC_010698.2"/>
</dbReference>
<dbReference type="SMR" id="B2UVF4"/>
<dbReference type="KEGG" id="hps:HPSH_07200"/>
<dbReference type="HOGENOM" id="CLU_102489_0_1_7"/>
<dbReference type="UniPathway" id="UPA00392"/>
<dbReference type="GO" id="GO:0005737">
    <property type="term" value="C:cytoplasm"/>
    <property type="evidence" value="ECO:0007669"/>
    <property type="project" value="UniProtKB-SubCell"/>
</dbReference>
<dbReference type="GO" id="GO:0033739">
    <property type="term" value="F:preQ1 synthase activity"/>
    <property type="evidence" value="ECO:0007669"/>
    <property type="project" value="UniProtKB-UniRule"/>
</dbReference>
<dbReference type="GO" id="GO:0008616">
    <property type="term" value="P:queuosine biosynthetic process"/>
    <property type="evidence" value="ECO:0007669"/>
    <property type="project" value="UniProtKB-UniRule"/>
</dbReference>
<dbReference type="GO" id="GO:0006400">
    <property type="term" value="P:tRNA modification"/>
    <property type="evidence" value="ECO:0007669"/>
    <property type="project" value="UniProtKB-UniRule"/>
</dbReference>
<dbReference type="Gene3D" id="3.30.1130.10">
    <property type="match status" value="1"/>
</dbReference>
<dbReference type="HAMAP" id="MF_00818">
    <property type="entry name" value="QueF_type1"/>
    <property type="match status" value="1"/>
</dbReference>
<dbReference type="InterPro" id="IPR043133">
    <property type="entry name" value="GTP-CH-I_C/QueF"/>
</dbReference>
<dbReference type="InterPro" id="IPR050084">
    <property type="entry name" value="NADPH_dep_7-cyano-7-deazaG_red"/>
</dbReference>
<dbReference type="InterPro" id="IPR029500">
    <property type="entry name" value="QueF"/>
</dbReference>
<dbReference type="InterPro" id="IPR016856">
    <property type="entry name" value="QueF_type1"/>
</dbReference>
<dbReference type="NCBIfam" id="TIGR03139">
    <property type="entry name" value="QueF-II"/>
    <property type="match status" value="1"/>
</dbReference>
<dbReference type="PANTHER" id="PTHR34354">
    <property type="entry name" value="NADPH-DEPENDENT 7-CYANO-7-DEAZAGUANINE REDUCTASE"/>
    <property type="match status" value="1"/>
</dbReference>
<dbReference type="PANTHER" id="PTHR34354:SF1">
    <property type="entry name" value="NADPH-DEPENDENT 7-CYANO-7-DEAZAGUANINE REDUCTASE"/>
    <property type="match status" value="1"/>
</dbReference>
<dbReference type="Pfam" id="PF14489">
    <property type="entry name" value="QueF"/>
    <property type="match status" value="1"/>
</dbReference>
<dbReference type="PIRSF" id="PIRSF027377">
    <property type="entry name" value="Nitrile_oxidored_QueF"/>
    <property type="match status" value="1"/>
</dbReference>
<dbReference type="SUPFAM" id="SSF55620">
    <property type="entry name" value="Tetrahydrobiopterin biosynthesis enzymes-like"/>
    <property type="match status" value="1"/>
</dbReference>
<accession>B2UVF4</accession>
<proteinExistence type="inferred from homology"/>
<gene>
    <name evidence="1" type="primary">queF</name>
    <name type="ordered locus">HPSH_07200</name>
</gene>
<name>QUEF_HELPS</name>
<protein>
    <recommendedName>
        <fullName evidence="1">NADPH-dependent 7-cyano-7-deazaguanine reductase</fullName>
        <ecNumber evidence="1">1.7.1.13</ecNumber>
    </recommendedName>
    <alternativeName>
        <fullName evidence="1">7-cyano-7-carbaguanine reductase</fullName>
    </alternativeName>
    <alternativeName>
        <fullName evidence="1">NADPH-dependent nitrile oxidoreductase</fullName>
    </alternativeName>
    <alternativeName>
        <fullName evidence="1">PreQ(0) reductase</fullName>
    </alternativeName>
</protein>
<evidence type="ECO:0000255" key="1">
    <source>
        <dbReference type="HAMAP-Rule" id="MF_00818"/>
    </source>
</evidence>
<organism>
    <name type="scientific">Helicobacter pylori (strain Shi470)</name>
    <dbReference type="NCBI Taxonomy" id="512562"/>
    <lineage>
        <taxon>Bacteria</taxon>
        <taxon>Pseudomonadati</taxon>
        <taxon>Campylobacterota</taxon>
        <taxon>Epsilonproteobacteria</taxon>
        <taxon>Campylobacterales</taxon>
        <taxon>Helicobacteraceae</taxon>
        <taxon>Helicobacter</taxon>
    </lineage>
</organism>
<feature type="chain" id="PRO_1000134305" description="NADPH-dependent 7-cyano-7-deazaguanine reductase">
    <location>
        <begin position="1"/>
        <end position="146"/>
    </location>
</feature>
<feature type="active site" description="Thioimide intermediate" evidence="1">
    <location>
        <position position="48"/>
    </location>
</feature>
<feature type="active site" description="Proton donor" evidence="1">
    <location>
        <position position="55"/>
    </location>
</feature>
<feature type="binding site" evidence="1">
    <location>
        <begin position="70"/>
        <end position="72"/>
    </location>
    <ligand>
        <name>substrate</name>
    </ligand>
</feature>
<feature type="binding site" evidence="1">
    <location>
        <begin position="89"/>
        <end position="90"/>
    </location>
    <ligand>
        <name>substrate</name>
    </ligand>
</feature>
<reference key="1">
    <citation type="submission" date="2008-05" db="EMBL/GenBank/DDBJ databases">
        <title>Genome sequence of Helicobacter pylori from the remote Amazon: traces of Asian ancestry of the first Americans.</title>
        <authorList>
            <person name="Kersulyte D."/>
            <person name="Kalia A."/>
            <person name="Gilman R.H."/>
            <person name="Berg D.E."/>
        </authorList>
    </citation>
    <scope>NUCLEOTIDE SEQUENCE [LARGE SCALE GENOMIC DNA]</scope>
    <source>
        <strain>Shi470</strain>
    </source>
</reference>
<sequence>MTPELKSLGAKTPYIFEYNSQLLEAFPNPNPNLDPLITLECKEFTSLCPITSQPDFGIIYIRYIPKDKMVESKSLKLYLFSYRNHGSFHESCINTILLDLVQLLEPKYLEVYGDFASRGGIAIKPFVNYAIKEYQEFKEKRLLNAK</sequence>
<comment type="function">
    <text evidence="1">Catalyzes the NADPH-dependent reduction of 7-cyano-7-deazaguanine (preQ0) to 7-aminomethyl-7-deazaguanine (preQ1).</text>
</comment>
<comment type="catalytic activity">
    <reaction evidence="1">
        <text>7-aminomethyl-7-carbaguanine + 2 NADP(+) = 7-cyano-7-deazaguanine + 2 NADPH + 3 H(+)</text>
        <dbReference type="Rhea" id="RHEA:13409"/>
        <dbReference type="ChEBI" id="CHEBI:15378"/>
        <dbReference type="ChEBI" id="CHEBI:45075"/>
        <dbReference type="ChEBI" id="CHEBI:57783"/>
        <dbReference type="ChEBI" id="CHEBI:58349"/>
        <dbReference type="ChEBI" id="CHEBI:58703"/>
        <dbReference type="EC" id="1.7.1.13"/>
    </reaction>
</comment>
<comment type="pathway">
    <text evidence="1">tRNA modification; tRNA-queuosine biosynthesis.</text>
</comment>
<comment type="subcellular location">
    <subcellularLocation>
        <location evidence="1">Cytoplasm</location>
    </subcellularLocation>
</comment>
<comment type="similarity">
    <text evidence="1">Belongs to the GTP cyclohydrolase I family. QueF type 1 subfamily.</text>
</comment>